<organism>
    <name type="scientific">Homo sapiens</name>
    <name type="common">Human</name>
    <dbReference type="NCBI Taxonomy" id="9606"/>
    <lineage>
        <taxon>Eukaryota</taxon>
        <taxon>Metazoa</taxon>
        <taxon>Chordata</taxon>
        <taxon>Craniata</taxon>
        <taxon>Vertebrata</taxon>
        <taxon>Euteleostomi</taxon>
        <taxon>Mammalia</taxon>
        <taxon>Eutheria</taxon>
        <taxon>Euarchontoglires</taxon>
        <taxon>Primates</taxon>
        <taxon>Haplorrhini</taxon>
        <taxon>Catarrhini</taxon>
        <taxon>Hominidae</taxon>
        <taxon>Homo</taxon>
    </lineage>
</organism>
<evidence type="ECO:0000250" key="1">
    <source>
        <dbReference type="UniProtKB" id="Q99714"/>
    </source>
</evidence>
<evidence type="ECO:0000250" key="2">
    <source>
        <dbReference type="UniProtKB" id="Q99L04"/>
    </source>
</evidence>
<evidence type="ECO:0000269" key="3">
    <source>
    </source>
</evidence>
<evidence type="ECO:0000269" key="4">
    <source>
    </source>
</evidence>
<evidence type="ECO:0000303" key="5">
    <source>
    </source>
</evidence>
<evidence type="ECO:0000303" key="6">
    <source>
    </source>
</evidence>
<evidence type="ECO:0000305" key="7"/>
<evidence type="ECO:0000305" key="8">
    <source>
    </source>
</evidence>
<evidence type="ECO:0000312" key="9">
    <source>
        <dbReference type="HGNC" id="HGNC:16445"/>
    </source>
</evidence>
<evidence type="ECO:0007744" key="10">
    <source>
    </source>
</evidence>
<evidence type="ECO:0007829" key="11">
    <source>
        <dbReference type="PDB" id="2QQ5"/>
    </source>
</evidence>
<keyword id="KW-0002">3D-structure</keyword>
<keyword id="KW-0007">Acetylation</keyword>
<keyword id="KW-0256">Endoplasmic reticulum</keyword>
<keyword id="KW-0488">Methylation</keyword>
<keyword id="KW-0520">NAD</keyword>
<keyword id="KW-0560">Oxidoreductase</keyword>
<keyword id="KW-1267">Proteomics identification</keyword>
<keyword id="KW-1185">Reference proteome</keyword>
<feature type="initiator methionine" description="Removed" evidence="10">
    <location>
        <position position="1"/>
    </location>
</feature>
<feature type="chain" id="PRO_0000054640" description="Dehydrogenase/reductase SDR family member 1">
    <location>
        <begin position="2"/>
        <end position="313"/>
    </location>
</feature>
<feature type="region of interest" description="Required for ER localization" evidence="4">
    <location>
        <begin position="235"/>
        <end position="313"/>
    </location>
</feature>
<feature type="active site" description="Proton acceptor" evidence="1">
    <location>
        <position position="163"/>
    </location>
</feature>
<feature type="binding site" evidence="1">
    <location>
        <position position="19"/>
    </location>
    <ligand>
        <name>NAD(+)</name>
        <dbReference type="ChEBI" id="CHEBI:57540"/>
    </ligand>
</feature>
<feature type="binding site" evidence="1">
    <location>
        <position position="64"/>
    </location>
    <ligand>
        <name>NAD(+)</name>
        <dbReference type="ChEBI" id="CHEBI:57540"/>
    </ligand>
</feature>
<feature type="binding site" evidence="1">
    <location>
        <position position="151"/>
    </location>
    <ligand>
        <name>substrate</name>
    </ligand>
</feature>
<feature type="binding site" evidence="1">
    <location>
        <position position="163"/>
    </location>
    <ligand>
        <name>NAD(+)</name>
        <dbReference type="ChEBI" id="CHEBI:57540"/>
    </ligand>
</feature>
<feature type="binding site" evidence="1">
    <location>
        <position position="167"/>
    </location>
    <ligand>
        <name>NAD(+)</name>
        <dbReference type="ChEBI" id="CHEBI:57540"/>
    </ligand>
</feature>
<feature type="binding site" evidence="1">
    <location>
        <position position="198"/>
    </location>
    <ligand>
        <name>NAD(+)</name>
        <dbReference type="ChEBI" id="CHEBI:57540"/>
    </ligand>
</feature>
<feature type="modified residue" description="N-acetylalanine" evidence="10">
    <location>
        <position position="2"/>
    </location>
</feature>
<feature type="modified residue" description="Omega-N-methylarginine" evidence="2">
    <location>
        <position position="21"/>
    </location>
</feature>
<feature type="sequence variant" id="VAR_052318" description="In dbSNP:rs10134537.">
    <original>T</original>
    <variation>I</variation>
    <location>
        <position position="241"/>
    </location>
</feature>
<feature type="sequence conflict" description="In Ref. 6; AAH15943." evidence="7" ref="6">
    <original>V</original>
    <variation>A</variation>
    <location>
        <position position="9"/>
    </location>
</feature>
<feature type="sequence conflict" description="In Ref. 6; AAH14057." evidence="7" ref="6">
    <original>P</original>
    <variation>L</variation>
    <location>
        <position position="162"/>
    </location>
</feature>
<feature type="sequence conflict" description="In Ref. 2; CAD38773." evidence="7" ref="2">
    <original>K</original>
    <variation>R</variation>
    <location>
        <position position="303"/>
    </location>
</feature>
<feature type="turn" evidence="11">
    <location>
        <begin position="4"/>
        <end position="7"/>
    </location>
</feature>
<feature type="strand" evidence="11">
    <location>
        <begin position="9"/>
        <end position="14"/>
    </location>
</feature>
<feature type="helix" evidence="11">
    <location>
        <begin position="18"/>
        <end position="29"/>
    </location>
</feature>
<feature type="strand" evidence="11">
    <location>
        <begin position="33"/>
        <end position="39"/>
    </location>
</feature>
<feature type="helix" evidence="11">
    <location>
        <begin position="41"/>
        <end position="54"/>
    </location>
</feature>
<feature type="strand" evidence="11">
    <location>
        <begin position="55"/>
        <end position="62"/>
    </location>
</feature>
<feature type="helix" evidence="11">
    <location>
        <begin position="68"/>
        <end position="82"/>
    </location>
</feature>
<feature type="strand" evidence="11">
    <location>
        <begin position="88"/>
        <end position="91"/>
    </location>
</feature>
<feature type="helix" evidence="11">
    <location>
        <begin position="97"/>
        <end position="102"/>
    </location>
</feature>
<feature type="turn" evidence="11">
    <location>
        <begin position="103"/>
        <end position="105"/>
    </location>
</feature>
<feature type="turn" evidence="11">
    <location>
        <begin position="108"/>
        <end position="110"/>
    </location>
</feature>
<feature type="helix" evidence="11">
    <location>
        <begin position="115"/>
        <end position="120"/>
    </location>
</feature>
<feature type="turn" evidence="11">
    <location>
        <begin position="121"/>
        <end position="124"/>
    </location>
</feature>
<feature type="helix" evidence="11">
    <location>
        <begin position="125"/>
        <end position="138"/>
    </location>
</feature>
<feature type="helix" evidence="11">
    <location>
        <begin position="139"/>
        <end position="141"/>
    </location>
</feature>
<feature type="strand" evidence="11">
    <location>
        <begin position="145"/>
        <end position="149"/>
    </location>
</feature>
<feature type="helix" evidence="11">
    <location>
        <begin position="152"/>
        <end position="154"/>
    </location>
</feature>
<feature type="helix" evidence="11">
    <location>
        <begin position="161"/>
        <end position="181"/>
    </location>
</feature>
<feature type="helix" evidence="11">
    <location>
        <begin position="182"/>
        <end position="184"/>
    </location>
</feature>
<feature type="strand" evidence="11">
    <location>
        <begin position="187"/>
        <end position="192"/>
    </location>
</feature>
<feature type="turn" evidence="11">
    <location>
        <begin position="198"/>
        <end position="200"/>
    </location>
</feature>
<feature type="helix" evidence="11">
    <location>
        <begin position="225"/>
        <end position="240"/>
    </location>
</feature>
<feature type="helix" evidence="11">
    <location>
        <begin position="245"/>
        <end position="248"/>
    </location>
</feature>
<feature type="strand" evidence="11">
    <location>
        <begin position="252"/>
        <end position="254"/>
    </location>
</feature>
<feature type="helix" evidence="11">
    <location>
        <begin position="255"/>
        <end position="261"/>
    </location>
</feature>
<proteinExistence type="evidence at protein level"/>
<gene>
    <name evidence="9" type="primary">DHRS1</name>
    <name type="synonym">SDR19C1</name>
</gene>
<name>DHRS1_HUMAN</name>
<comment type="function">
    <text evidence="4">NADPH-dependent oxidoreductase which catalyzes the reduction of steroids (estrone, androstene-3,17-dione and cortisone) as well as prostaglandin E1, isatin and xenobiotics in vitro (PubMed:30031147). May have a role in steroid and/or xenobiotic metabolism (PubMed:30031147).</text>
</comment>
<comment type="catalytic activity">
    <reaction evidence="8">
        <text>17alpha-estradiol + NADP(+) = estrone + NADPH + H(+)</text>
        <dbReference type="Rhea" id="RHEA:16705"/>
        <dbReference type="ChEBI" id="CHEBI:15378"/>
        <dbReference type="ChEBI" id="CHEBI:17160"/>
        <dbReference type="ChEBI" id="CHEBI:17263"/>
        <dbReference type="ChEBI" id="CHEBI:57783"/>
        <dbReference type="ChEBI" id="CHEBI:58349"/>
    </reaction>
    <physiologicalReaction direction="right-to-left" evidence="8">
        <dbReference type="Rhea" id="RHEA:16707"/>
    </physiologicalReaction>
</comment>
<comment type="catalytic activity">
    <reaction evidence="8">
        <text>testosterone + NADP(+) = androst-4-ene-3,17-dione + NADPH + H(+)</text>
        <dbReference type="Rhea" id="RHEA:14981"/>
        <dbReference type="ChEBI" id="CHEBI:15378"/>
        <dbReference type="ChEBI" id="CHEBI:16422"/>
        <dbReference type="ChEBI" id="CHEBI:17347"/>
        <dbReference type="ChEBI" id="CHEBI:57783"/>
        <dbReference type="ChEBI" id="CHEBI:58349"/>
    </reaction>
    <physiologicalReaction direction="right-to-left" evidence="8">
        <dbReference type="Rhea" id="RHEA:14983"/>
    </physiologicalReaction>
</comment>
<comment type="catalytic activity">
    <reaction evidence="8">
        <text>prostaglandin E1 + NADPH + H(+) = prostaglandin F1 + NADP(+)</text>
        <dbReference type="Rhea" id="RHEA:68612"/>
        <dbReference type="ChEBI" id="CHEBI:15378"/>
        <dbReference type="ChEBI" id="CHEBI:57397"/>
        <dbReference type="ChEBI" id="CHEBI:57783"/>
        <dbReference type="ChEBI" id="CHEBI:58349"/>
        <dbReference type="ChEBI" id="CHEBI:178049"/>
    </reaction>
    <physiologicalReaction direction="left-to-right" evidence="8">
        <dbReference type="Rhea" id="RHEA:68613"/>
    </physiologicalReaction>
</comment>
<comment type="catalytic activity">
    <reaction evidence="4">
        <text>isatin + NADPH + H(+) = 3-hydroxyindolin-2-one + NADP(+)</text>
        <dbReference type="Rhea" id="RHEA:68608"/>
        <dbReference type="ChEBI" id="CHEBI:15378"/>
        <dbReference type="ChEBI" id="CHEBI:27539"/>
        <dbReference type="ChEBI" id="CHEBI:28536"/>
        <dbReference type="ChEBI" id="CHEBI:57783"/>
        <dbReference type="ChEBI" id="CHEBI:58349"/>
    </reaction>
    <physiologicalReaction direction="left-to-right" evidence="8">
        <dbReference type="Rhea" id="RHEA:68609"/>
    </physiologicalReaction>
</comment>
<comment type="interaction">
    <interactant intactId="EBI-746300">
        <id>Q96LJ7</id>
    </interactant>
    <interactant intactId="EBI-752094">
        <id>Q12982</id>
        <label>BNIP2</label>
    </interactant>
    <organismsDiffer>false</organismsDiffer>
    <experiments>3</experiments>
</comment>
<comment type="interaction">
    <interactant intactId="EBI-746300">
        <id>Q96LJ7</id>
    </interactant>
    <interactant intactId="EBI-517508">
        <id>Q9NR28</id>
        <label>DIABLO</label>
    </interactant>
    <organismsDiffer>false</organismsDiffer>
    <experiments>3</experiments>
</comment>
<comment type="interaction">
    <interactant intactId="EBI-746300">
        <id>Q96LJ7</id>
    </interactant>
    <interactant intactId="EBI-1047093">
        <id>O76011</id>
        <label>KRT34</label>
    </interactant>
    <organismsDiffer>false</organismsDiffer>
    <experiments>3</experiments>
</comment>
<comment type="interaction">
    <interactant intactId="EBI-746300">
        <id>Q96LJ7</id>
    </interactant>
    <interactant intactId="EBI-11959885">
        <id>Q07627</id>
        <label>KRTAP1-1</label>
    </interactant>
    <organismsDiffer>false</organismsDiffer>
    <experiments>3</experiments>
</comment>
<comment type="interaction">
    <interactant intactId="EBI-746300">
        <id>Q96LJ7</id>
    </interactant>
    <interactant intactId="EBI-11749135">
        <id>Q8IUG1</id>
        <label>KRTAP1-3</label>
    </interactant>
    <organismsDiffer>false</organismsDiffer>
    <experiments>3</experiments>
</comment>
<comment type="interaction">
    <interactant intactId="EBI-746300">
        <id>Q96LJ7</id>
    </interactant>
    <interactant intactId="EBI-10171774">
        <id>P60410</id>
        <label>KRTAP10-8</label>
    </interactant>
    <organismsDiffer>false</organismsDiffer>
    <experiments>8</experiments>
</comment>
<comment type="interaction">
    <interactant intactId="EBI-746300">
        <id>Q96LJ7</id>
    </interactant>
    <interactant intactId="EBI-10172052">
        <id>P60411</id>
        <label>KRTAP10-9</label>
    </interactant>
    <organismsDiffer>false</organismsDiffer>
    <experiments>3</experiments>
</comment>
<comment type="interaction">
    <interactant intactId="EBI-746300">
        <id>Q96LJ7</id>
    </interactant>
    <interactant intactId="EBI-1052037">
        <id>Q8IUC1</id>
        <label>KRTAP11-1</label>
    </interactant>
    <organismsDiffer>false</organismsDiffer>
    <experiments>3</experiments>
</comment>
<comment type="interaction">
    <interactant intactId="EBI-746300">
        <id>Q96LJ7</id>
    </interactant>
    <interactant intactId="EBI-10210845">
        <id>P59990</id>
        <label>KRTAP12-1</label>
    </interactant>
    <organismsDiffer>false</organismsDiffer>
    <experiments>3</experiments>
</comment>
<comment type="interaction">
    <interactant intactId="EBI-746300">
        <id>Q96LJ7</id>
    </interactant>
    <interactant intactId="EBI-10176379">
        <id>P59991</id>
        <label>KRTAP12-2</label>
    </interactant>
    <organismsDiffer>false</organismsDiffer>
    <experiments>3</experiments>
</comment>
<comment type="interaction">
    <interactant intactId="EBI-746300">
        <id>Q96LJ7</id>
    </interactant>
    <interactant intactId="EBI-11953334">
        <id>P60328</id>
        <label>KRTAP12-3</label>
    </interactant>
    <organismsDiffer>false</organismsDiffer>
    <experiments>3</experiments>
</comment>
<comment type="interaction">
    <interactant intactId="EBI-746300">
        <id>Q96LJ7</id>
    </interactant>
    <interactant intactId="EBI-751260">
        <id>Q9BYR7</id>
        <label>KRTAP3-2</label>
    </interactant>
    <organismsDiffer>false</organismsDiffer>
    <experiments>3</experiments>
</comment>
<comment type="interaction">
    <interactant intactId="EBI-746300">
        <id>Q96LJ7</id>
    </interactant>
    <interactant intactId="EBI-34579671">
        <id>Q9BYQ7</id>
        <label>KRTAP4-1</label>
    </interactant>
    <organismsDiffer>false</organismsDiffer>
    <experiments>3</experiments>
</comment>
<comment type="interaction">
    <interactant intactId="EBI-746300">
        <id>Q96LJ7</id>
    </interactant>
    <interactant intactId="EBI-10302392">
        <id>Q9BYQ6</id>
        <label>KRTAP4-11</label>
    </interactant>
    <organismsDiffer>false</organismsDiffer>
    <experiments>3</experiments>
</comment>
<comment type="interaction">
    <interactant intactId="EBI-746300">
        <id>Q96LJ7</id>
    </interactant>
    <interactant intactId="EBI-12074540">
        <id>Q6L8H4</id>
        <label>KRTAP5-1</label>
    </interactant>
    <organismsDiffer>false</organismsDiffer>
    <experiments>3</experiments>
</comment>
<comment type="interaction">
    <interactant intactId="EBI-746300">
        <id>Q96LJ7</id>
    </interactant>
    <interactant intactId="EBI-11958178">
        <id>Q701N4</id>
        <label>KRTAP5-2</label>
    </interactant>
    <organismsDiffer>false</organismsDiffer>
    <experiments>3</experiments>
</comment>
<comment type="interaction">
    <interactant intactId="EBI-746300">
        <id>Q96LJ7</id>
    </interactant>
    <interactant intactId="EBI-3958099">
        <id>P26371</id>
        <label>KRTAP5-9</label>
    </interactant>
    <organismsDiffer>false</organismsDiffer>
    <experiments>3</experiments>
</comment>
<comment type="interaction">
    <interactant intactId="EBI-746300">
        <id>Q96LJ7</id>
    </interactant>
    <interactant intactId="EBI-11962084">
        <id>Q3LI66</id>
        <label>KRTAP6-2</label>
    </interactant>
    <organismsDiffer>false</organismsDiffer>
    <experiments>3</experiments>
</comment>
<comment type="interaction">
    <interactant intactId="EBI-746300">
        <id>Q96LJ7</id>
    </interactant>
    <interactant intactId="EBI-22311199">
        <id>Q3LI67</id>
        <label>KRTAP6-3</label>
    </interactant>
    <organismsDiffer>false</organismsDiffer>
    <experiments>3</experiments>
</comment>
<comment type="interaction">
    <interactant intactId="EBI-746300">
        <id>Q96LJ7</id>
    </interactant>
    <interactant intactId="EBI-11958364">
        <id>Q9BYQ0</id>
        <label>KRTAP9-8</label>
    </interactant>
    <organismsDiffer>false</organismsDiffer>
    <experiments>3</experiments>
</comment>
<comment type="interaction">
    <interactant intactId="EBI-746300">
        <id>Q96LJ7</id>
    </interactant>
    <interactant intactId="EBI-21591415">
        <id>P13473-2</id>
        <label>LAMP2</label>
    </interactant>
    <organismsDiffer>false</organismsDiffer>
    <experiments>3</experiments>
</comment>
<comment type="interaction">
    <interactant intactId="EBI-746300">
        <id>Q96LJ7</id>
    </interactant>
    <interactant intactId="EBI-11478468">
        <id>O14633</id>
        <label>LCE2B</label>
    </interactant>
    <organismsDiffer>false</organismsDiffer>
    <experiments>3</experiments>
</comment>
<comment type="interaction">
    <interactant intactId="EBI-746300">
        <id>Q96LJ7</id>
    </interactant>
    <interactant intactId="EBI-2865388">
        <id>Q969G2</id>
        <label>LHX4</label>
    </interactant>
    <organismsDiffer>false</organismsDiffer>
    <experiments>3</experiments>
</comment>
<comment type="interaction">
    <interactant intactId="EBI-746300">
        <id>Q96LJ7</id>
    </interactant>
    <interactant intactId="EBI-724076">
        <id>Q99750</id>
        <label>MDFI</label>
    </interactant>
    <organismsDiffer>false</organismsDiffer>
    <experiments>4</experiments>
</comment>
<comment type="interaction">
    <interactant intactId="EBI-746300">
        <id>Q96LJ7</id>
    </interactant>
    <interactant intactId="EBI-11522433">
        <id>Q5JR59-3</id>
        <label>MTUS2</label>
    </interactant>
    <organismsDiffer>false</organismsDiffer>
    <experiments>3</experiments>
</comment>
<comment type="interaction">
    <interactant intactId="EBI-746300">
        <id>Q96LJ7</id>
    </interactant>
    <interactant intactId="EBI-945833">
        <id>Q7Z3S9</id>
        <label>NOTCH2NLA</label>
    </interactant>
    <organismsDiffer>false</organismsDiffer>
    <experiments>3</experiments>
</comment>
<comment type="interaction">
    <interactant intactId="EBI-746300">
        <id>Q96LJ7</id>
    </interactant>
    <interactant intactId="EBI-22310682">
        <id>P0DPK4</id>
        <label>NOTCH2NLC</label>
    </interactant>
    <organismsDiffer>false</organismsDiffer>
    <experiments>3</experiments>
</comment>
<comment type="interaction">
    <interactant intactId="EBI-746300">
        <id>Q96LJ7</id>
    </interactant>
    <interactant intactId="EBI-5280197">
        <id>O75400-2</id>
        <label>PRPF40A</label>
    </interactant>
    <organismsDiffer>false</organismsDiffer>
    <experiments>3</experiments>
</comment>
<comment type="interaction">
    <interactant intactId="EBI-746300">
        <id>Q96LJ7</id>
    </interactant>
    <interactant intactId="EBI-2623095">
        <id>Q9Y371</id>
        <label>SH3GLB1</label>
    </interactant>
    <organismsDiffer>false</organismsDiffer>
    <experiments>3</experiments>
</comment>
<comment type="subcellular location">
    <subcellularLocation>
        <location evidence="4">Endoplasmic reticulum</location>
    </subcellularLocation>
    <text evidence="4">May be attached to the ER membrane by its C-terminus segment.</text>
</comment>
<comment type="tissue specificity">
    <text evidence="3 4">Detected in heart, liver, adrenal glands, and at low levels in skeletal muscle, kidney, pancreas and brain.</text>
</comment>
<comment type="domain">
    <text evidence="4">May be attached to the ER membrane by its C-terminus segment.</text>
</comment>
<comment type="similarity">
    <text evidence="7">Belongs to the short-chain dehydrogenases/reductases (SDR) family.</text>
</comment>
<protein>
    <recommendedName>
        <fullName evidence="5">Dehydrogenase/reductase SDR family member 1</fullName>
        <ecNumber evidence="4">1.1.1.-</ecNumber>
    </recommendedName>
    <alternativeName>
        <fullName evidence="6">Short chain dehydrogenase/reductase family 19C member 1</fullName>
        <shortName evidence="6">Protein SDR19C1</shortName>
    </alternativeName>
</protein>
<dbReference type="EC" id="1.1.1.-" evidence="4"/>
<dbReference type="EMBL" id="AF418205">
    <property type="protein sequence ID" value="AAN32660.1"/>
    <property type="molecule type" value="mRNA"/>
</dbReference>
<dbReference type="EMBL" id="BX247980">
    <property type="protein sequence ID" value="CAD62314.1"/>
    <property type="molecule type" value="mRNA"/>
</dbReference>
<dbReference type="EMBL" id="AK058159">
    <property type="protein sequence ID" value="BAB71694.1"/>
    <property type="molecule type" value="mRNA"/>
</dbReference>
<dbReference type="EMBL" id="AL833917">
    <property type="protein sequence ID" value="CAD38773.1"/>
    <property type="molecule type" value="mRNA"/>
</dbReference>
<dbReference type="EMBL" id="CH471078">
    <property type="protein sequence ID" value="EAW66036.1"/>
    <property type="molecule type" value="Genomic_DNA"/>
</dbReference>
<dbReference type="EMBL" id="CH471078">
    <property type="protein sequence ID" value="EAW66037.1"/>
    <property type="molecule type" value="Genomic_DNA"/>
</dbReference>
<dbReference type="EMBL" id="CH471078">
    <property type="protein sequence ID" value="EAW66040.1"/>
    <property type="molecule type" value="Genomic_DNA"/>
</dbReference>
<dbReference type="EMBL" id="BC014057">
    <property type="protein sequence ID" value="AAH14057.1"/>
    <property type="molecule type" value="mRNA"/>
</dbReference>
<dbReference type="EMBL" id="BC015943">
    <property type="protein sequence ID" value="AAH15943.1"/>
    <property type="molecule type" value="mRNA"/>
</dbReference>
<dbReference type="CCDS" id="CCDS9623.1"/>
<dbReference type="RefSeq" id="NP_001129522.1">
    <property type="nucleotide sequence ID" value="NM_001136050.3"/>
</dbReference>
<dbReference type="RefSeq" id="NP_612461.1">
    <property type="nucleotide sequence ID" value="NM_138452.3"/>
</dbReference>
<dbReference type="PDB" id="2QQ5">
    <property type="method" value="X-ray"/>
    <property type="resolution" value="1.80 A"/>
    <property type="chains" value="A=3-262"/>
</dbReference>
<dbReference type="PDBsum" id="2QQ5"/>
<dbReference type="SMR" id="Q96LJ7"/>
<dbReference type="BioGRID" id="125457">
    <property type="interactions" value="54"/>
</dbReference>
<dbReference type="FunCoup" id="Q96LJ7">
    <property type="interactions" value="400"/>
</dbReference>
<dbReference type="IntAct" id="Q96LJ7">
    <property type="interactions" value="36"/>
</dbReference>
<dbReference type="MINT" id="Q96LJ7"/>
<dbReference type="STRING" id="9606.ENSP00000380027"/>
<dbReference type="iPTMnet" id="Q96LJ7"/>
<dbReference type="PhosphoSitePlus" id="Q96LJ7"/>
<dbReference type="SwissPalm" id="Q96LJ7"/>
<dbReference type="BioMuta" id="DHRS1"/>
<dbReference type="DMDM" id="37999854"/>
<dbReference type="jPOST" id="Q96LJ7"/>
<dbReference type="MassIVE" id="Q96LJ7"/>
<dbReference type="PaxDb" id="9606-ENSP00000288111"/>
<dbReference type="PeptideAtlas" id="Q96LJ7"/>
<dbReference type="ProteomicsDB" id="77214"/>
<dbReference type="Pumba" id="Q96LJ7"/>
<dbReference type="Antibodypedia" id="23">
    <property type="antibodies" value="161 antibodies from 27 providers"/>
</dbReference>
<dbReference type="DNASU" id="115817"/>
<dbReference type="Ensembl" id="ENST00000288111.12">
    <property type="protein sequence ID" value="ENSP00000288111.7"/>
    <property type="gene ID" value="ENSG00000157379.14"/>
</dbReference>
<dbReference type="Ensembl" id="ENST00000396813.5">
    <property type="protein sequence ID" value="ENSP00000380027.1"/>
    <property type="gene ID" value="ENSG00000157379.14"/>
</dbReference>
<dbReference type="Ensembl" id="ENST00000644514.2">
    <property type="protein sequence ID" value="ENSP00000496132.1"/>
    <property type="gene ID" value="ENSG00000284868.2"/>
</dbReference>
<dbReference type="Ensembl" id="ENST00000647514.1">
    <property type="protein sequence ID" value="ENSP00000493735.1"/>
    <property type="gene ID" value="ENSG00000284868.2"/>
</dbReference>
<dbReference type="GeneID" id="115817"/>
<dbReference type="KEGG" id="hsa:115817"/>
<dbReference type="MANE-Select" id="ENST00000288111.12">
    <property type="protein sequence ID" value="ENSP00000288111.7"/>
    <property type="RefSeq nucleotide sequence ID" value="NM_001136050.3"/>
    <property type="RefSeq protein sequence ID" value="NP_001129522.1"/>
</dbReference>
<dbReference type="UCSC" id="uc001woj.3">
    <property type="organism name" value="human"/>
</dbReference>
<dbReference type="AGR" id="HGNC:16445"/>
<dbReference type="CTD" id="115817"/>
<dbReference type="DisGeNET" id="115817"/>
<dbReference type="GeneCards" id="DHRS1"/>
<dbReference type="HGNC" id="HGNC:16445">
    <property type="gene designation" value="DHRS1"/>
</dbReference>
<dbReference type="HPA" id="ENSG00000157379">
    <property type="expression patterns" value="Tissue enhanced (esophagus, liver)"/>
</dbReference>
<dbReference type="MIM" id="610410">
    <property type="type" value="gene"/>
</dbReference>
<dbReference type="neXtProt" id="NX_Q96LJ7"/>
<dbReference type="OpenTargets" id="ENSG00000157379"/>
<dbReference type="PharmGKB" id="PA134914102"/>
<dbReference type="VEuPathDB" id="HostDB:ENSG00000157379"/>
<dbReference type="eggNOG" id="KOG0725">
    <property type="taxonomic scope" value="Eukaryota"/>
</dbReference>
<dbReference type="GeneTree" id="ENSGT00940000157797"/>
<dbReference type="HOGENOM" id="CLU_010194_14_1_1"/>
<dbReference type="InParanoid" id="Q96LJ7"/>
<dbReference type="OMA" id="ATVSIWM"/>
<dbReference type="OrthoDB" id="1933717at2759"/>
<dbReference type="PAN-GO" id="Q96LJ7">
    <property type="GO annotations" value="0 GO annotations based on evolutionary models"/>
</dbReference>
<dbReference type="PhylomeDB" id="Q96LJ7"/>
<dbReference type="TreeFam" id="TF314146"/>
<dbReference type="PathwayCommons" id="Q96LJ7"/>
<dbReference type="SignaLink" id="Q96LJ7"/>
<dbReference type="BioGRID-ORCS" id="115817">
    <property type="hits" value="6 hits in 1157 CRISPR screens"/>
</dbReference>
<dbReference type="ChiTaRS" id="DHRS1">
    <property type="organism name" value="human"/>
</dbReference>
<dbReference type="EvolutionaryTrace" id="Q96LJ7"/>
<dbReference type="GeneWiki" id="DHRS1"/>
<dbReference type="GenomeRNAi" id="115817"/>
<dbReference type="Pharos" id="Q96LJ7">
    <property type="development level" value="Tdark"/>
</dbReference>
<dbReference type="PRO" id="PR:Q96LJ7"/>
<dbReference type="Proteomes" id="UP000005640">
    <property type="component" value="Chromosome 14"/>
</dbReference>
<dbReference type="RNAct" id="Q96LJ7">
    <property type="molecule type" value="protein"/>
</dbReference>
<dbReference type="Bgee" id="ENSG00000157379">
    <property type="expression patterns" value="Expressed in lower esophagus mucosa and 95 other cell types or tissues"/>
</dbReference>
<dbReference type="ExpressionAtlas" id="Q96LJ7">
    <property type="expression patterns" value="baseline and differential"/>
</dbReference>
<dbReference type="GO" id="GO:0005783">
    <property type="term" value="C:endoplasmic reticulum"/>
    <property type="evidence" value="ECO:0000314"/>
    <property type="project" value="LIFEdb"/>
</dbReference>
<dbReference type="GO" id="GO:0004090">
    <property type="term" value="F:carbonyl reductase (NADPH) activity"/>
    <property type="evidence" value="ECO:0000314"/>
    <property type="project" value="UniProtKB"/>
</dbReference>
<dbReference type="GO" id="GO:0047881">
    <property type="term" value="F:estradiol 17-alpha-dehydrogenase [NAD(P)+] activity"/>
    <property type="evidence" value="ECO:0007669"/>
    <property type="project" value="RHEA"/>
</dbReference>
<dbReference type="GO" id="GO:0016616">
    <property type="term" value="F:oxidoreductase activity, acting on the CH-OH group of donors, NAD or NADP as acceptor"/>
    <property type="evidence" value="ECO:0000314"/>
    <property type="project" value="UniProtKB"/>
</dbReference>
<dbReference type="GO" id="GO:0047045">
    <property type="term" value="F:testosterone 17-beta-dehydrogenase (NADP+) activity"/>
    <property type="evidence" value="ECO:0007669"/>
    <property type="project" value="RHEA"/>
</dbReference>
<dbReference type="CDD" id="cd09763">
    <property type="entry name" value="DHRS1-like_SDR_c"/>
    <property type="match status" value="1"/>
</dbReference>
<dbReference type="FunFam" id="3.40.50.720:FF:000459">
    <property type="entry name" value="Dehydrogenase/reductase SDR family member 1"/>
    <property type="match status" value="1"/>
</dbReference>
<dbReference type="Gene3D" id="3.40.50.720">
    <property type="entry name" value="NAD(P)-binding Rossmann-like Domain"/>
    <property type="match status" value="1"/>
</dbReference>
<dbReference type="InterPro" id="IPR036291">
    <property type="entry name" value="NAD(P)-bd_dom_sf"/>
</dbReference>
<dbReference type="InterPro" id="IPR002347">
    <property type="entry name" value="SDR_fam"/>
</dbReference>
<dbReference type="PANTHER" id="PTHR44147">
    <property type="entry name" value="DEHYDROGENASE/REDUCTASE SDR FAMILY MEMBER 1"/>
    <property type="match status" value="1"/>
</dbReference>
<dbReference type="PANTHER" id="PTHR44147:SF2">
    <property type="entry name" value="DEHYDROGENASE_REDUCTASE SDR FAMILY MEMBER 1"/>
    <property type="match status" value="1"/>
</dbReference>
<dbReference type="Pfam" id="PF00106">
    <property type="entry name" value="adh_short"/>
    <property type="match status" value="1"/>
</dbReference>
<dbReference type="PRINTS" id="PR00081">
    <property type="entry name" value="GDHRDH"/>
</dbReference>
<dbReference type="SUPFAM" id="SSF51735">
    <property type="entry name" value="NAD(P)-binding Rossmann-fold domains"/>
    <property type="match status" value="1"/>
</dbReference>
<reference key="1">
    <citation type="journal article" date="2001" name="Mol. Biol. Rep.">
        <title>Molecular cloning and characterization of a novel dehydrogenase/reductase (SDR family) member 1 gene from human fetal brain.</title>
        <authorList>
            <person name="Wu Q."/>
            <person name="Xu M."/>
            <person name="Cheng C."/>
            <person name="Zhou Z."/>
            <person name="Huang Y."/>
            <person name="Zhao W."/>
            <person name="Zeng L."/>
            <person name="Xu J."/>
            <person name="Fu X."/>
            <person name="Ying K."/>
            <person name="Xie Y."/>
            <person name="Mao Y."/>
        </authorList>
    </citation>
    <scope>NUCLEOTIDE SEQUENCE [MRNA]</scope>
    <scope>TISSUE SPECIFICITY</scope>
    <source>
        <tissue>Fetal brain</tissue>
    </source>
</reference>
<reference key="2">
    <citation type="submission" date="2003-02" db="EMBL/GenBank/DDBJ databases">
        <title>Full-length cDNA libraries and normalization.</title>
        <authorList>
            <person name="Li W.B."/>
            <person name="Gruber C."/>
            <person name="Jessee J."/>
            <person name="Polayes D."/>
        </authorList>
    </citation>
    <scope>NUCLEOTIDE SEQUENCE [LARGE SCALE MRNA]</scope>
    <source>
        <tissue>Fetal brain</tissue>
    </source>
</reference>
<reference key="3">
    <citation type="journal article" date="2004" name="Nat. Genet.">
        <title>Complete sequencing and characterization of 21,243 full-length human cDNAs.</title>
        <authorList>
            <person name="Ota T."/>
            <person name="Suzuki Y."/>
            <person name="Nishikawa T."/>
            <person name="Otsuki T."/>
            <person name="Sugiyama T."/>
            <person name="Irie R."/>
            <person name="Wakamatsu A."/>
            <person name="Hayashi K."/>
            <person name="Sato H."/>
            <person name="Nagai K."/>
            <person name="Kimura K."/>
            <person name="Makita H."/>
            <person name="Sekine M."/>
            <person name="Obayashi M."/>
            <person name="Nishi T."/>
            <person name="Shibahara T."/>
            <person name="Tanaka T."/>
            <person name="Ishii S."/>
            <person name="Yamamoto J."/>
            <person name="Saito K."/>
            <person name="Kawai Y."/>
            <person name="Isono Y."/>
            <person name="Nakamura Y."/>
            <person name="Nagahari K."/>
            <person name="Murakami K."/>
            <person name="Yasuda T."/>
            <person name="Iwayanagi T."/>
            <person name="Wagatsuma M."/>
            <person name="Shiratori A."/>
            <person name="Sudo H."/>
            <person name="Hosoiri T."/>
            <person name="Kaku Y."/>
            <person name="Kodaira H."/>
            <person name="Kondo H."/>
            <person name="Sugawara M."/>
            <person name="Takahashi M."/>
            <person name="Kanda K."/>
            <person name="Yokoi T."/>
            <person name="Furuya T."/>
            <person name="Kikkawa E."/>
            <person name="Omura Y."/>
            <person name="Abe K."/>
            <person name="Kamihara K."/>
            <person name="Katsuta N."/>
            <person name="Sato K."/>
            <person name="Tanikawa M."/>
            <person name="Yamazaki M."/>
            <person name="Ninomiya K."/>
            <person name="Ishibashi T."/>
            <person name="Yamashita H."/>
            <person name="Murakawa K."/>
            <person name="Fujimori K."/>
            <person name="Tanai H."/>
            <person name="Kimata M."/>
            <person name="Watanabe M."/>
            <person name="Hiraoka S."/>
            <person name="Chiba Y."/>
            <person name="Ishida S."/>
            <person name="Ono Y."/>
            <person name="Takiguchi S."/>
            <person name="Watanabe S."/>
            <person name="Yosida M."/>
            <person name="Hotuta T."/>
            <person name="Kusano J."/>
            <person name="Kanehori K."/>
            <person name="Takahashi-Fujii A."/>
            <person name="Hara H."/>
            <person name="Tanase T.-O."/>
            <person name="Nomura Y."/>
            <person name="Togiya S."/>
            <person name="Komai F."/>
            <person name="Hara R."/>
            <person name="Takeuchi K."/>
            <person name="Arita M."/>
            <person name="Imose N."/>
            <person name="Musashino K."/>
            <person name="Yuuki H."/>
            <person name="Oshima A."/>
            <person name="Sasaki N."/>
            <person name="Aotsuka S."/>
            <person name="Yoshikawa Y."/>
            <person name="Matsunawa H."/>
            <person name="Ichihara T."/>
            <person name="Shiohata N."/>
            <person name="Sano S."/>
            <person name="Moriya S."/>
            <person name="Momiyama H."/>
            <person name="Satoh N."/>
            <person name="Takami S."/>
            <person name="Terashima Y."/>
            <person name="Suzuki O."/>
            <person name="Nakagawa S."/>
            <person name="Senoh A."/>
            <person name="Mizoguchi H."/>
            <person name="Goto Y."/>
            <person name="Shimizu F."/>
            <person name="Wakebe H."/>
            <person name="Hishigaki H."/>
            <person name="Watanabe T."/>
            <person name="Sugiyama A."/>
            <person name="Takemoto M."/>
            <person name="Kawakami B."/>
            <person name="Yamazaki M."/>
            <person name="Watanabe K."/>
            <person name="Kumagai A."/>
            <person name="Itakura S."/>
            <person name="Fukuzumi Y."/>
            <person name="Fujimori Y."/>
            <person name="Komiyama M."/>
            <person name="Tashiro H."/>
            <person name="Tanigami A."/>
            <person name="Fujiwara T."/>
            <person name="Ono T."/>
            <person name="Yamada K."/>
            <person name="Fujii Y."/>
            <person name="Ozaki K."/>
            <person name="Hirao M."/>
            <person name="Ohmori Y."/>
            <person name="Kawabata A."/>
            <person name="Hikiji T."/>
            <person name="Kobatake N."/>
            <person name="Inagaki H."/>
            <person name="Ikema Y."/>
            <person name="Okamoto S."/>
            <person name="Okitani R."/>
            <person name="Kawakami T."/>
            <person name="Noguchi S."/>
            <person name="Itoh T."/>
            <person name="Shigeta K."/>
            <person name="Senba T."/>
            <person name="Matsumura K."/>
            <person name="Nakajima Y."/>
            <person name="Mizuno T."/>
            <person name="Morinaga M."/>
            <person name="Sasaki M."/>
            <person name="Togashi T."/>
            <person name="Oyama M."/>
            <person name="Hata H."/>
            <person name="Watanabe M."/>
            <person name="Komatsu T."/>
            <person name="Mizushima-Sugano J."/>
            <person name="Satoh T."/>
            <person name="Shirai Y."/>
            <person name="Takahashi Y."/>
            <person name="Nakagawa K."/>
            <person name="Okumura K."/>
            <person name="Nagase T."/>
            <person name="Nomura N."/>
            <person name="Kikuchi H."/>
            <person name="Masuho Y."/>
            <person name="Yamashita R."/>
            <person name="Nakai K."/>
            <person name="Yada T."/>
            <person name="Nakamura Y."/>
            <person name="Ohara O."/>
            <person name="Isogai T."/>
            <person name="Sugano S."/>
        </authorList>
    </citation>
    <scope>NUCLEOTIDE SEQUENCE [LARGE SCALE MRNA]</scope>
    <source>
        <tissue>Testis</tissue>
    </source>
</reference>
<reference key="4">
    <citation type="journal article" date="2007" name="BMC Genomics">
        <title>The full-ORF clone resource of the German cDNA consortium.</title>
        <authorList>
            <person name="Bechtel S."/>
            <person name="Rosenfelder H."/>
            <person name="Duda A."/>
            <person name="Schmidt C.P."/>
            <person name="Ernst U."/>
            <person name="Wellenreuther R."/>
            <person name="Mehrle A."/>
            <person name="Schuster C."/>
            <person name="Bahr A."/>
            <person name="Bloecker H."/>
            <person name="Heubner D."/>
            <person name="Hoerlein A."/>
            <person name="Michel G."/>
            <person name="Wedler H."/>
            <person name="Koehrer K."/>
            <person name="Ottenwaelder B."/>
            <person name="Poustka A."/>
            <person name="Wiemann S."/>
            <person name="Schupp I."/>
        </authorList>
    </citation>
    <scope>NUCLEOTIDE SEQUENCE [LARGE SCALE MRNA]</scope>
    <source>
        <tissue>Brain</tissue>
    </source>
</reference>
<reference key="5">
    <citation type="submission" date="2005-09" db="EMBL/GenBank/DDBJ databases">
        <authorList>
            <person name="Mural R.J."/>
            <person name="Istrail S."/>
            <person name="Sutton G.G."/>
            <person name="Florea L."/>
            <person name="Halpern A.L."/>
            <person name="Mobarry C.M."/>
            <person name="Lippert R."/>
            <person name="Walenz B."/>
            <person name="Shatkay H."/>
            <person name="Dew I."/>
            <person name="Miller J.R."/>
            <person name="Flanigan M.J."/>
            <person name="Edwards N.J."/>
            <person name="Bolanos R."/>
            <person name="Fasulo D."/>
            <person name="Halldorsson B.V."/>
            <person name="Hannenhalli S."/>
            <person name="Turner R."/>
            <person name="Yooseph S."/>
            <person name="Lu F."/>
            <person name="Nusskern D.R."/>
            <person name="Shue B.C."/>
            <person name="Zheng X.H."/>
            <person name="Zhong F."/>
            <person name="Delcher A.L."/>
            <person name="Huson D.H."/>
            <person name="Kravitz S.A."/>
            <person name="Mouchard L."/>
            <person name="Reinert K."/>
            <person name="Remington K.A."/>
            <person name="Clark A.G."/>
            <person name="Waterman M.S."/>
            <person name="Eichler E.E."/>
            <person name="Adams M.D."/>
            <person name="Hunkapiller M.W."/>
            <person name="Myers E.W."/>
            <person name="Venter J.C."/>
        </authorList>
    </citation>
    <scope>NUCLEOTIDE SEQUENCE [LARGE SCALE GENOMIC DNA]</scope>
</reference>
<reference key="6">
    <citation type="journal article" date="2004" name="Genome Res.">
        <title>The status, quality, and expansion of the NIH full-length cDNA project: the Mammalian Gene Collection (MGC).</title>
        <authorList>
            <consortium name="The MGC Project Team"/>
        </authorList>
    </citation>
    <scope>NUCLEOTIDE SEQUENCE [LARGE SCALE MRNA]</scope>
    <source>
        <tissue>Pancreas</tissue>
        <tissue>Skin</tissue>
    </source>
</reference>
<reference key="7">
    <citation type="journal article" date="2009" name="Chem. Biol. Interact.">
        <title>The SDR (short-chain dehydrogenase/reductase and related enzymes) nomenclature initiative.</title>
        <authorList>
            <person name="Persson B."/>
            <person name="Kallberg Y."/>
            <person name="Bray J.E."/>
            <person name="Bruford E."/>
            <person name="Dellaporta S.L."/>
            <person name="Favia A.D."/>
            <person name="Duarte R.G."/>
            <person name="Joernvall H."/>
            <person name="Kavanagh K.L."/>
            <person name="Kedishvili N."/>
            <person name="Kisiela M."/>
            <person name="Maser E."/>
            <person name="Mindnich R."/>
            <person name="Orchard S."/>
            <person name="Penning T.M."/>
            <person name="Thornton J.M."/>
            <person name="Adamski J."/>
            <person name="Oppermann U."/>
        </authorList>
    </citation>
    <scope>GENE FAMILY</scope>
    <scope>NOMENCLATURE</scope>
</reference>
<reference key="8">
    <citation type="journal article" date="2011" name="BMC Syst. Biol.">
        <title>Initial characterization of the human central proteome.</title>
        <authorList>
            <person name="Burkard T.R."/>
            <person name="Planyavsky M."/>
            <person name="Kaupe I."/>
            <person name="Breitwieser F.P."/>
            <person name="Buerckstuemmer T."/>
            <person name="Bennett K.L."/>
            <person name="Superti-Furga G."/>
            <person name="Colinge J."/>
        </authorList>
    </citation>
    <scope>IDENTIFICATION BY MASS SPECTROMETRY [LARGE SCALE ANALYSIS]</scope>
</reference>
<reference key="9">
    <citation type="journal article" date="2012" name="Proc. Natl. Acad. Sci. U.S.A.">
        <title>N-terminal acetylome analyses and functional insights of the N-terminal acetyltransferase NatB.</title>
        <authorList>
            <person name="Van Damme P."/>
            <person name="Lasa M."/>
            <person name="Polevoda B."/>
            <person name="Gazquez C."/>
            <person name="Elosegui-Artola A."/>
            <person name="Kim D.S."/>
            <person name="De Juan-Pardo E."/>
            <person name="Demeyer K."/>
            <person name="Hole K."/>
            <person name="Larrea E."/>
            <person name="Timmerman E."/>
            <person name="Prieto J."/>
            <person name="Arnesen T."/>
            <person name="Sherman F."/>
            <person name="Gevaert K."/>
            <person name="Aldabe R."/>
        </authorList>
    </citation>
    <scope>ACETYLATION [LARGE SCALE ANALYSIS] AT ALA-2</scope>
    <scope>CLEAVAGE OF INITIATOR METHIONINE [LARGE SCALE ANALYSIS]</scope>
    <scope>IDENTIFICATION BY MASS SPECTROMETRY [LARGE SCALE ANALYSIS]</scope>
</reference>
<reference key="10">
    <citation type="journal article" date="2014" name="J. Proteomics">
        <title>An enzyme assisted RP-RPLC approach for in-depth analysis of human liver phosphoproteome.</title>
        <authorList>
            <person name="Bian Y."/>
            <person name="Song C."/>
            <person name="Cheng K."/>
            <person name="Dong M."/>
            <person name="Wang F."/>
            <person name="Huang J."/>
            <person name="Sun D."/>
            <person name="Wang L."/>
            <person name="Ye M."/>
            <person name="Zou H."/>
        </authorList>
    </citation>
    <scope>IDENTIFICATION BY MASS SPECTROMETRY [LARGE SCALE ANALYSIS]</scope>
    <source>
        <tissue>Liver</tissue>
    </source>
</reference>
<reference key="11">
    <citation type="journal article" date="2019" name="J. Steroid Biochem. Mol. Biol.">
        <title>Initial characterization of human DHRS1 (SDR19C1), a member of the short-chain dehydrogenase/reductase superfamily.</title>
        <authorList>
            <person name="Zemanova L."/>
            <person name="Navratilova H."/>
            <person name="Andrys R."/>
            <person name="Sperkova K."/>
            <person name="Andrejs J."/>
            <person name="Kozakova K."/>
            <person name="Meier M."/>
            <person name="Moeller G."/>
            <person name="Novotna E."/>
            <person name="Safr M."/>
            <person name="Adamski J."/>
            <person name="Wsol V."/>
        </authorList>
    </citation>
    <scope>FUNCTION</scope>
    <scope>CATALYTIC ACTIVITY</scope>
    <scope>SUBCELLULAR LOCATION</scope>
    <scope>REGION</scope>
</reference>
<reference key="12">
    <citation type="submission" date="2007-08" db="PDB data bank">
        <title>Crystal structure of human SDR family member 1.</title>
        <authorList>
            <consortium name="Structural genomics consortium (SGC)"/>
        </authorList>
    </citation>
    <scope>X-RAY CRYSTALLOGRAPHY (1.8 ANGSTROMS) OF 3-262</scope>
</reference>
<sequence length="313" mass="33909">MAAPMNGQVCVVTGASRGIGRGIALQLCKAGATVYITGRHLDTLRVVAQEAQSLGGQCVPVVCDSSQESEVRSLFEQVDREQQGRLDVLVNNAYAGVQTILNTRNKAFWETPASMWDDINNVGLRGHYFCSVYGARLMVPAGQGLIVVISSPGSLQYMFNVPYGVGKAACDKLAADCAHELRRHGVSCVSLWPGIVQTELLKEHMAKEEVLQDPVLKQFKSAFSSAETTELSGKCVVALATDPNILSLSGKVLPSCDLARRYGLRDVDGRPVQDYLSLSSVLSHVSGLGWLASYLPSFLRVPKWIIALYTSKF</sequence>
<accession>Q96LJ7</accession>
<accession>D3DS71</accession>
<accession>Q8NDG3</accession>
<accession>Q96B59</accession>
<accession>Q96CQ5</accession>